<organism>
    <name type="scientific">Cutibacterium acnes (strain DSM 16379 / KPA171202)</name>
    <name type="common">Propionibacterium acnes</name>
    <dbReference type="NCBI Taxonomy" id="267747"/>
    <lineage>
        <taxon>Bacteria</taxon>
        <taxon>Bacillati</taxon>
        <taxon>Actinomycetota</taxon>
        <taxon>Actinomycetes</taxon>
        <taxon>Propionibacteriales</taxon>
        <taxon>Propionibacteriaceae</taxon>
        <taxon>Cutibacterium</taxon>
    </lineage>
</organism>
<keyword id="KW-0067">ATP-binding</keyword>
<keyword id="KW-0342">GTP-binding</keyword>
<keyword id="KW-0547">Nucleotide-binding</keyword>
<sequence>MSTEQTTKTPRVVIITGISGAGRRTAAHAVEDLGWYVVDNLPPAMLGALVDEIAANNIDRLAVVLDVRSRIMFDALGVAVNALDERGIDPAIVFLEASDETIVRRQESSRRPLPLQQGGHLLDAVALERRMLSDLRAEADLVIDTTSITARQLAQRIDHAFAEGIDEGLAFQVMSFGFKRGVPIDADLVFDVRFLPNPYWVPELRPKTGLSSDVASYVMAQAGATEFIDRVEQLLGGMAPGYLREGKKQVTVAVGCTGGKHRSTAISEELSTRLAARGHRTAVLHRDLGKE</sequence>
<gene>
    <name type="ordered locus">PPA0813</name>
</gene>
<reference key="1">
    <citation type="journal article" date="2004" name="Science">
        <title>The complete genome sequence of Propionibacterium acnes, a commensal of human skin.</title>
        <authorList>
            <person name="Brueggemann H."/>
            <person name="Henne A."/>
            <person name="Hoster F."/>
            <person name="Liesegang H."/>
            <person name="Wiezer A."/>
            <person name="Strittmatter A."/>
            <person name="Hujer S."/>
            <person name="Duerre P."/>
            <person name="Gottschalk G."/>
        </authorList>
    </citation>
    <scope>NUCLEOTIDE SEQUENCE [LARGE SCALE GENOMIC DNA]</scope>
    <source>
        <strain>DSM 16379 / KPA171202</strain>
    </source>
</reference>
<protein>
    <recommendedName>
        <fullName evidence="1">Nucleotide-binding protein PPA0813</fullName>
    </recommendedName>
</protein>
<evidence type="ECO:0000255" key="1">
    <source>
        <dbReference type="HAMAP-Rule" id="MF_00636"/>
    </source>
</evidence>
<accession>Q6A9J7</accession>
<proteinExistence type="inferred from homology"/>
<comment type="function">
    <text evidence="1">Displays ATPase and GTPase activities.</text>
</comment>
<comment type="similarity">
    <text evidence="1">Belongs to the RapZ-like family.</text>
</comment>
<dbReference type="EMBL" id="AE017283">
    <property type="protein sequence ID" value="AAT82569.1"/>
    <property type="molecule type" value="Genomic_DNA"/>
</dbReference>
<dbReference type="SMR" id="Q6A9J7"/>
<dbReference type="EnsemblBacteria" id="AAT82569">
    <property type="protein sequence ID" value="AAT82569"/>
    <property type="gene ID" value="PPA0813"/>
</dbReference>
<dbReference type="KEGG" id="pac:PPA0813"/>
<dbReference type="eggNOG" id="COG1660">
    <property type="taxonomic scope" value="Bacteria"/>
</dbReference>
<dbReference type="HOGENOM" id="CLU_059558_0_0_11"/>
<dbReference type="Proteomes" id="UP000000603">
    <property type="component" value="Chromosome"/>
</dbReference>
<dbReference type="GO" id="GO:0005524">
    <property type="term" value="F:ATP binding"/>
    <property type="evidence" value="ECO:0007669"/>
    <property type="project" value="UniProtKB-UniRule"/>
</dbReference>
<dbReference type="GO" id="GO:0005525">
    <property type="term" value="F:GTP binding"/>
    <property type="evidence" value="ECO:0007669"/>
    <property type="project" value="UniProtKB-UniRule"/>
</dbReference>
<dbReference type="Gene3D" id="3.40.50.300">
    <property type="entry name" value="P-loop containing nucleotide triphosphate hydrolases"/>
    <property type="match status" value="1"/>
</dbReference>
<dbReference type="HAMAP" id="MF_00636">
    <property type="entry name" value="RapZ_like"/>
    <property type="match status" value="1"/>
</dbReference>
<dbReference type="InterPro" id="IPR027417">
    <property type="entry name" value="P-loop_NTPase"/>
</dbReference>
<dbReference type="InterPro" id="IPR005337">
    <property type="entry name" value="RapZ-like"/>
</dbReference>
<dbReference type="InterPro" id="IPR053930">
    <property type="entry name" value="RapZ-like_N"/>
</dbReference>
<dbReference type="InterPro" id="IPR053931">
    <property type="entry name" value="RapZ_C"/>
</dbReference>
<dbReference type="NCBIfam" id="NF003828">
    <property type="entry name" value="PRK05416.1"/>
    <property type="match status" value="1"/>
</dbReference>
<dbReference type="PANTHER" id="PTHR30448">
    <property type="entry name" value="RNASE ADAPTER PROTEIN RAPZ"/>
    <property type="match status" value="1"/>
</dbReference>
<dbReference type="PANTHER" id="PTHR30448:SF0">
    <property type="entry name" value="RNASE ADAPTER PROTEIN RAPZ"/>
    <property type="match status" value="1"/>
</dbReference>
<dbReference type="Pfam" id="PF22740">
    <property type="entry name" value="PapZ_C"/>
    <property type="match status" value="1"/>
</dbReference>
<dbReference type="Pfam" id="PF03668">
    <property type="entry name" value="RapZ-like_N"/>
    <property type="match status" value="1"/>
</dbReference>
<dbReference type="PIRSF" id="PIRSF005052">
    <property type="entry name" value="P-loopkin"/>
    <property type="match status" value="1"/>
</dbReference>
<dbReference type="SUPFAM" id="SSF52540">
    <property type="entry name" value="P-loop containing nucleoside triphosphate hydrolases"/>
    <property type="match status" value="1"/>
</dbReference>
<name>Y813_CUTAK</name>
<feature type="chain" id="PRO_0000107742" description="Nucleotide-binding protein PPA0813">
    <location>
        <begin position="1"/>
        <end position="291"/>
    </location>
</feature>
<feature type="binding site" evidence="1">
    <location>
        <begin position="17"/>
        <end position="24"/>
    </location>
    <ligand>
        <name>ATP</name>
        <dbReference type="ChEBI" id="CHEBI:30616"/>
    </ligand>
</feature>
<feature type="binding site" evidence="1">
    <location>
        <begin position="66"/>
        <end position="69"/>
    </location>
    <ligand>
        <name>GTP</name>
        <dbReference type="ChEBI" id="CHEBI:37565"/>
    </ligand>
</feature>